<organism>
    <name type="scientific">Laticauda colubrina</name>
    <name type="common">Yellow-lipped sea krait</name>
    <name type="synonym">Banded sea krait</name>
    <dbReference type="NCBI Taxonomy" id="8628"/>
    <lineage>
        <taxon>Eukaryota</taxon>
        <taxon>Metazoa</taxon>
        <taxon>Chordata</taxon>
        <taxon>Craniata</taxon>
        <taxon>Vertebrata</taxon>
        <taxon>Euteleostomi</taxon>
        <taxon>Lepidosauria</taxon>
        <taxon>Squamata</taxon>
        <taxon>Bifurcata</taxon>
        <taxon>Unidentata</taxon>
        <taxon>Episquamata</taxon>
        <taxon>Toxicofera</taxon>
        <taxon>Serpentes</taxon>
        <taxon>Colubroidea</taxon>
        <taxon>Elapidae</taxon>
        <taxon>Laticaudinae</taxon>
        <taxon>Laticauda</taxon>
    </lineage>
</organism>
<reference key="1">
    <citation type="journal article" date="1982" name="Biochem. J.">
        <title>Amino acid sequences of two novel long-chain neurotoxins from the venom of the sea snake Laticauda colubrina.</title>
        <authorList>
            <person name="Kim H.S."/>
            <person name="Tamiya N."/>
        </authorList>
    </citation>
    <scope>PROTEIN SEQUENCE</scope>
    <scope>TOXIC DOSE</scope>
    <scope>SUBCELLULAR LOCATION</scope>
    <source>
        <strain>Solomon Island</strain>
        <tissue>Venom</tissue>
    </source>
</reference>
<protein>
    <recommendedName>
        <fullName>Toxin Lc a</fullName>
    </recommendedName>
</protein>
<dbReference type="SMR" id="P0C8R7"/>
<dbReference type="GO" id="GO:0005576">
    <property type="term" value="C:extracellular region"/>
    <property type="evidence" value="ECO:0007669"/>
    <property type="project" value="UniProtKB-SubCell"/>
</dbReference>
<dbReference type="GO" id="GO:0030550">
    <property type="term" value="F:acetylcholine receptor inhibitor activity"/>
    <property type="evidence" value="ECO:0007669"/>
    <property type="project" value="UniProtKB-KW"/>
</dbReference>
<dbReference type="GO" id="GO:0099106">
    <property type="term" value="F:ion channel regulator activity"/>
    <property type="evidence" value="ECO:0007669"/>
    <property type="project" value="UniProtKB-KW"/>
</dbReference>
<dbReference type="GO" id="GO:0090729">
    <property type="term" value="F:toxin activity"/>
    <property type="evidence" value="ECO:0007669"/>
    <property type="project" value="UniProtKB-KW"/>
</dbReference>
<dbReference type="CDD" id="cd00206">
    <property type="entry name" value="TFP_snake_toxin"/>
    <property type="match status" value="1"/>
</dbReference>
<dbReference type="Gene3D" id="2.10.60.10">
    <property type="entry name" value="CD59"/>
    <property type="match status" value="1"/>
</dbReference>
<dbReference type="InterPro" id="IPR003571">
    <property type="entry name" value="Snake_3FTx"/>
</dbReference>
<dbReference type="InterPro" id="IPR045860">
    <property type="entry name" value="Snake_toxin-like_sf"/>
</dbReference>
<dbReference type="InterPro" id="IPR018354">
    <property type="entry name" value="Snake_toxin_con_site"/>
</dbReference>
<dbReference type="InterPro" id="IPR054131">
    <property type="entry name" value="Toxin_cobra-type"/>
</dbReference>
<dbReference type="Pfam" id="PF21947">
    <property type="entry name" value="Toxin_cobra-type"/>
    <property type="match status" value="1"/>
</dbReference>
<dbReference type="SUPFAM" id="SSF57302">
    <property type="entry name" value="Snake toxin-like"/>
    <property type="match status" value="1"/>
</dbReference>
<dbReference type="PROSITE" id="PS00272">
    <property type="entry name" value="SNAKE_TOXIN"/>
    <property type="match status" value="1"/>
</dbReference>
<proteinExistence type="evidence at protein level"/>
<keyword id="KW-0008">Acetylcholine receptor inhibiting toxin</keyword>
<keyword id="KW-0903">Direct protein sequencing</keyword>
<keyword id="KW-1015">Disulfide bond</keyword>
<keyword id="KW-0872">Ion channel impairing toxin</keyword>
<keyword id="KW-0528">Neurotoxin</keyword>
<keyword id="KW-0629">Postsynaptic neurotoxin</keyword>
<keyword id="KW-0964">Secreted</keyword>
<keyword id="KW-0800">Toxin</keyword>
<evidence type="ECO:0000250" key="1"/>
<evidence type="ECO:0000250" key="2">
    <source>
        <dbReference type="UniProtKB" id="P0C8R6"/>
    </source>
</evidence>
<evidence type="ECO:0000269" key="3">
    <source>
    </source>
</evidence>
<evidence type="ECO:0000305" key="4"/>
<name>3L2A_LATCO</name>
<feature type="chain" id="PRO_0000364184" description="Toxin Lc a">
    <location>
        <begin position="1"/>
        <end position="69"/>
    </location>
</feature>
<feature type="disulfide bond" evidence="1">
    <location>
        <begin position="3"/>
        <end position="20"/>
    </location>
</feature>
<feature type="disulfide bond" evidence="1">
    <location>
        <begin position="13"/>
        <end position="41"/>
    </location>
</feature>
<feature type="disulfide bond" evidence="1">
    <location>
        <begin position="45"/>
        <end position="56"/>
    </location>
</feature>
<feature type="disulfide bond" evidence="1">
    <location>
        <begin position="57"/>
        <end position="62"/>
    </location>
</feature>
<comment type="function">
    <text evidence="2">Binds with high affinity to muscular nicotinic acetylcholine receptors (nAChRs), whereas it binds with a low affinity to neuronal alpha-7/CHRNA7 nAChRs.</text>
</comment>
<comment type="subcellular location">
    <subcellularLocation>
        <location evidence="3">Secreted</location>
    </subcellularLocation>
</comment>
<comment type="tissue specificity">
    <text evidence="4">Expressed by the venom gland.</text>
</comment>
<comment type="toxic dose">
    <text evidence="3">LD(50) is 0.12 mg/kg by intramuscular injection into mice.</text>
</comment>
<comment type="miscellaneous">
    <text>Has the length of long neurotoxins, but only 4 disulfide bonds, as short neurotoxins.</text>
</comment>
<comment type="similarity">
    <text evidence="4">Belongs to the three-finger toxin family. Long-chain subfamily. Type II alpha-neurotoxin sub-subfamily.</text>
</comment>
<sequence>RICYLAPRDTQICAPGQEICYLKSWDDGTGFLKGNRLEFGCAATCPTVKPGIDIKCCSTDKCNPHPKLA</sequence>
<accession>P0C8R7</accession>